<gene>
    <name evidence="1" type="primary">rplN</name>
    <name type="ordered locus">XC_3330</name>
</gene>
<proteinExistence type="inferred from homology"/>
<evidence type="ECO:0000255" key="1">
    <source>
        <dbReference type="HAMAP-Rule" id="MF_01367"/>
    </source>
</evidence>
<evidence type="ECO:0000305" key="2"/>
<keyword id="KW-0687">Ribonucleoprotein</keyword>
<keyword id="KW-0689">Ribosomal protein</keyword>
<keyword id="KW-0694">RNA-binding</keyword>
<keyword id="KW-0699">rRNA-binding</keyword>
<feature type="chain" id="PRO_0000266585" description="Large ribosomal subunit protein uL14">
    <location>
        <begin position="1"/>
        <end position="122"/>
    </location>
</feature>
<accession>Q4URE9</accession>
<reference key="1">
    <citation type="journal article" date="2005" name="Genome Res.">
        <title>Comparative and functional genomic analyses of the pathogenicity of phytopathogen Xanthomonas campestris pv. campestris.</title>
        <authorList>
            <person name="Qian W."/>
            <person name="Jia Y."/>
            <person name="Ren S.-X."/>
            <person name="He Y.-Q."/>
            <person name="Feng J.-X."/>
            <person name="Lu L.-F."/>
            <person name="Sun Q."/>
            <person name="Ying G."/>
            <person name="Tang D.-J."/>
            <person name="Tang H."/>
            <person name="Wu W."/>
            <person name="Hao P."/>
            <person name="Wang L."/>
            <person name="Jiang B.-L."/>
            <person name="Zeng S."/>
            <person name="Gu W.-Y."/>
            <person name="Lu G."/>
            <person name="Rong L."/>
            <person name="Tian Y."/>
            <person name="Yao Z."/>
            <person name="Fu G."/>
            <person name="Chen B."/>
            <person name="Fang R."/>
            <person name="Qiang B."/>
            <person name="Chen Z."/>
            <person name="Zhao G.-P."/>
            <person name="Tang J.-L."/>
            <person name="He C."/>
        </authorList>
    </citation>
    <scope>NUCLEOTIDE SEQUENCE [LARGE SCALE GENOMIC DNA]</scope>
    <source>
        <strain>8004</strain>
    </source>
</reference>
<name>RL14_XANC8</name>
<comment type="function">
    <text evidence="1">Binds to 23S rRNA. Forms part of two intersubunit bridges in the 70S ribosome.</text>
</comment>
<comment type="subunit">
    <text evidence="1">Part of the 50S ribosomal subunit. Forms a cluster with proteins L3 and L19. In the 70S ribosome, L14 and L19 interact and together make contacts with the 16S rRNA in bridges B5 and B8.</text>
</comment>
<comment type="similarity">
    <text evidence="1">Belongs to the universal ribosomal protein uL14 family.</text>
</comment>
<sequence>MIQMQSYLDVADNSGAKEVMCIKVLGGSKRRYAHIGDIIKVTVKDAIPRGKVKKGEVYDAVVVRTRKGVRRPDGSLIRFDGNAAVLLNNKQEPIGTRIFGPVTRELRSEKFMKIVSLAPEVL</sequence>
<organism>
    <name type="scientific">Xanthomonas campestris pv. campestris (strain 8004)</name>
    <dbReference type="NCBI Taxonomy" id="314565"/>
    <lineage>
        <taxon>Bacteria</taxon>
        <taxon>Pseudomonadati</taxon>
        <taxon>Pseudomonadota</taxon>
        <taxon>Gammaproteobacteria</taxon>
        <taxon>Lysobacterales</taxon>
        <taxon>Lysobacteraceae</taxon>
        <taxon>Xanthomonas</taxon>
    </lineage>
</organism>
<dbReference type="EMBL" id="CP000050">
    <property type="protein sequence ID" value="AAY50374.1"/>
    <property type="molecule type" value="Genomic_DNA"/>
</dbReference>
<dbReference type="RefSeq" id="WP_003486699.1">
    <property type="nucleotide sequence ID" value="NZ_CP155948.1"/>
</dbReference>
<dbReference type="SMR" id="Q4URE9"/>
<dbReference type="GeneID" id="97509346"/>
<dbReference type="KEGG" id="xcb:XC_3330"/>
<dbReference type="HOGENOM" id="CLU_095071_2_1_6"/>
<dbReference type="Proteomes" id="UP000000420">
    <property type="component" value="Chromosome"/>
</dbReference>
<dbReference type="GO" id="GO:0022625">
    <property type="term" value="C:cytosolic large ribosomal subunit"/>
    <property type="evidence" value="ECO:0007669"/>
    <property type="project" value="TreeGrafter"/>
</dbReference>
<dbReference type="GO" id="GO:0070180">
    <property type="term" value="F:large ribosomal subunit rRNA binding"/>
    <property type="evidence" value="ECO:0007669"/>
    <property type="project" value="TreeGrafter"/>
</dbReference>
<dbReference type="GO" id="GO:0003735">
    <property type="term" value="F:structural constituent of ribosome"/>
    <property type="evidence" value="ECO:0007669"/>
    <property type="project" value="InterPro"/>
</dbReference>
<dbReference type="GO" id="GO:0006412">
    <property type="term" value="P:translation"/>
    <property type="evidence" value="ECO:0007669"/>
    <property type="project" value="UniProtKB-UniRule"/>
</dbReference>
<dbReference type="CDD" id="cd00337">
    <property type="entry name" value="Ribosomal_uL14"/>
    <property type="match status" value="1"/>
</dbReference>
<dbReference type="FunFam" id="2.40.150.20:FF:000001">
    <property type="entry name" value="50S ribosomal protein L14"/>
    <property type="match status" value="1"/>
</dbReference>
<dbReference type="Gene3D" id="2.40.150.20">
    <property type="entry name" value="Ribosomal protein L14"/>
    <property type="match status" value="1"/>
</dbReference>
<dbReference type="HAMAP" id="MF_01367">
    <property type="entry name" value="Ribosomal_uL14"/>
    <property type="match status" value="1"/>
</dbReference>
<dbReference type="InterPro" id="IPR000218">
    <property type="entry name" value="Ribosomal_uL14"/>
</dbReference>
<dbReference type="InterPro" id="IPR005745">
    <property type="entry name" value="Ribosomal_uL14_bac-type"/>
</dbReference>
<dbReference type="InterPro" id="IPR019972">
    <property type="entry name" value="Ribosomal_uL14_CS"/>
</dbReference>
<dbReference type="InterPro" id="IPR036853">
    <property type="entry name" value="Ribosomal_uL14_sf"/>
</dbReference>
<dbReference type="NCBIfam" id="TIGR01067">
    <property type="entry name" value="rplN_bact"/>
    <property type="match status" value="1"/>
</dbReference>
<dbReference type="PANTHER" id="PTHR11761">
    <property type="entry name" value="50S/60S RIBOSOMAL PROTEIN L14/L23"/>
    <property type="match status" value="1"/>
</dbReference>
<dbReference type="PANTHER" id="PTHR11761:SF3">
    <property type="entry name" value="LARGE RIBOSOMAL SUBUNIT PROTEIN UL14M"/>
    <property type="match status" value="1"/>
</dbReference>
<dbReference type="Pfam" id="PF00238">
    <property type="entry name" value="Ribosomal_L14"/>
    <property type="match status" value="1"/>
</dbReference>
<dbReference type="SMART" id="SM01374">
    <property type="entry name" value="Ribosomal_L14"/>
    <property type="match status" value="1"/>
</dbReference>
<dbReference type="SUPFAM" id="SSF50193">
    <property type="entry name" value="Ribosomal protein L14"/>
    <property type="match status" value="1"/>
</dbReference>
<dbReference type="PROSITE" id="PS00049">
    <property type="entry name" value="RIBOSOMAL_L14"/>
    <property type="match status" value="1"/>
</dbReference>
<protein>
    <recommendedName>
        <fullName evidence="1">Large ribosomal subunit protein uL14</fullName>
    </recommendedName>
    <alternativeName>
        <fullName evidence="2">50S ribosomal protein L14</fullName>
    </alternativeName>
</protein>